<accession>Q9BZE1</accession>
<accession>Q96Q67</accession>
<accession>Q9BWR1</accession>
<accession>Q9P0P3</accession>
<name>RM37_HUMAN</name>
<comment type="subunit">
    <text evidence="3 4 5 6">Component of the mitochondrial large ribosomal subunit (mt-LSU) (PubMed:25278503, PubMed:25838379, PubMed:28892042, PubMed:35177605). Mature mammalian 55S mitochondrial ribosomes consist of a small (28S) and a large (39S) subunit. The 28S small subunit contains a 12S ribosomal RNA (12S mt-rRNA) and 30 different proteins. The 39S large subunit contains a 16S rRNA (16S mt-rRNA), a copy of mitochondrial valine transfer RNA (mt-tRNA(Val)), which plays an integral structural role, and 52 different proteins. mL37 forms a heterodimer with mL65.</text>
</comment>
<comment type="subcellular location">
    <subcellularLocation>
        <location evidence="3 4 5">Mitochondrion</location>
    </subcellularLocation>
</comment>
<comment type="similarity">
    <text evidence="10">Belongs to the mitochondrion-specific ribosomal protein mL37 family.</text>
</comment>
<comment type="sequence caution" evidence="10">
    <conflict type="frameshift">
        <sequence resource="EMBL-CDS" id="AAF36155"/>
    </conflict>
</comment>
<proteinExistence type="evidence at protein level"/>
<reference key="1">
    <citation type="submission" date="2000-12" db="EMBL/GenBank/DDBJ databases">
        <title>Novel gene located on human chromosome 1.</title>
        <authorList>
            <person name="Levshenkova E.V."/>
            <person name="Bashirova A.A."/>
            <person name="Markelov M.L."/>
            <person name="Frolova E.I."/>
        </authorList>
    </citation>
    <scope>NUCLEOTIDE SEQUENCE [MRNA]</scope>
    <scope>VARIANT SER-366</scope>
    <source>
        <tissue>Skeletal muscle</tissue>
    </source>
</reference>
<reference key="2">
    <citation type="journal article" date="2000" name="Genome Res.">
        <title>Cloning and functional analysis of cDNAs with open reading frames for 300 previously undefined genes expressed in CD34+ hematopoietic stem/progenitor cells.</title>
        <authorList>
            <person name="Zhang Q.-H."/>
            <person name="Ye M."/>
            <person name="Wu X.-Y."/>
            <person name="Ren S.-X."/>
            <person name="Zhao M."/>
            <person name="Zhao C.-J."/>
            <person name="Fu G."/>
            <person name="Shen Y."/>
            <person name="Fan H.-Y."/>
            <person name="Lu G."/>
            <person name="Zhong M."/>
            <person name="Xu X.-R."/>
            <person name="Han Z.-G."/>
            <person name="Zhang J.-W."/>
            <person name="Tao J."/>
            <person name="Huang Q.-H."/>
            <person name="Zhou J."/>
            <person name="Hu G.-X."/>
            <person name="Gu J."/>
            <person name="Chen S.-J."/>
            <person name="Chen Z."/>
        </authorList>
    </citation>
    <scope>NUCLEOTIDE SEQUENCE [LARGE SCALE MRNA]</scope>
    <scope>VARIANT SER-366</scope>
    <source>
        <tissue>Umbilical cord blood</tissue>
    </source>
</reference>
<reference key="3">
    <citation type="submission" date="2005-09" db="EMBL/GenBank/DDBJ databases">
        <authorList>
            <consortium name="NIEHS SNPs program"/>
        </authorList>
    </citation>
    <scope>NUCLEOTIDE SEQUENCE [GENOMIC DNA]</scope>
    <scope>VARIANTS VAL-322 AND SER-366</scope>
</reference>
<reference key="4">
    <citation type="journal article" date="2006" name="Nature">
        <title>The DNA sequence and biological annotation of human chromosome 1.</title>
        <authorList>
            <person name="Gregory S.G."/>
            <person name="Barlow K.F."/>
            <person name="McLay K.E."/>
            <person name="Kaul R."/>
            <person name="Swarbreck D."/>
            <person name="Dunham A."/>
            <person name="Scott C.E."/>
            <person name="Howe K.L."/>
            <person name="Woodfine K."/>
            <person name="Spencer C.C.A."/>
            <person name="Jones M.C."/>
            <person name="Gillson C."/>
            <person name="Searle S."/>
            <person name="Zhou Y."/>
            <person name="Kokocinski F."/>
            <person name="McDonald L."/>
            <person name="Evans R."/>
            <person name="Phillips K."/>
            <person name="Atkinson A."/>
            <person name="Cooper R."/>
            <person name="Jones C."/>
            <person name="Hall R.E."/>
            <person name="Andrews T.D."/>
            <person name="Lloyd C."/>
            <person name="Ainscough R."/>
            <person name="Almeida J.P."/>
            <person name="Ambrose K.D."/>
            <person name="Anderson F."/>
            <person name="Andrew R.W."/>
            <person name="Ashwell R.I.S."/>
            <person name="Aubin K."/>
            <person name="Babbage A.K."/>
            <person name="Bagguley C.L."/>
            <person name="Bailey J."/>
            <person name="Beasley H."/>
            <person name="Bethel G."/>
            <person name="Bird C.P."/>
            <person name="Bray-Allen S."/>
            <person name="Brown J.Y."/>
            <person name="Brown A.J."/>
            <person name="Buckley D."/>
            <person name="Burton J."/>
            <person name="Bye J."/>
            <person name="Carder C."/>
            <person name="Chapman J.C."/>
            <person name="Clark S.Y."/>
            <person name="Clarke G."/>
            <person name="Clee C."/>
            <person name="Cobley V."/>
            <person name="Collier R.E."/>
            <person name="Corby N."/>
            <person name="Coville G.J."/>
            <person name="Davies J."/>
            <person name="Deadman R."/>
            <person name="Dunn M."/>
            <person name="Earthrowl M."/>
            <person name="Ellington A.G."/>
            <person name="Errington H."/>
            <person name="Frankish A."/>
            <person name="Frankland J."/>
            <person name="French L."/>
            <person name="Garner P."/>
            <person name="Garnett J."/>
            <person name="Gay L."/>
            <person name="Ghori M.R.J."/>
            <person name="Gibson R."/>
            <person name="Gilby L.M."/>
            <person name="Gillett W."/>
            <person name="Glithero R.J."/>
            <person name="Grafham D.V."/>
            <person name="Griffiths C."/>
            <person name="Griffiths-Jones S."/>
            <person name="Grocock R."/>
            <person name="Hammond S."/>
            <person name="Harrison E.S.I."/>
            <person name="Hart E."/>
            <person name="Haugen E."/>
            <person name="Heath P.D."/>
            <person name="Holmes S."/>
            <person name="Holt K."/>
            <person name="Howden P.J."/>
            <person name="Hunt A.R."/>
            <person name="Hunt S.E."/>
            <person name="Hunter G."/>
            <person name="Isherwood J."/>
            <person name="James R."/>
            <person name="Johnson C."/>
            <person name="Johnson D."/>
            <person name="Joy A."/>
            <person name="Kay M."/>
            <person name="Kershaw J.K."/>
            <person name="Kibukawa M."/>
            <person name="Kimberley A.M."/>
            <person name="King A."/>
            <person name="Knights A.J."/>
            <person name="Lad H."/>
            <person name="Laird G."/>
            <person name="Lawlor S."/>
            <person name="Leongamornlert D.A."/>
            <person name="Lloyd D.M."/>
            <person name="Loveland J."/>
            <person name="Lovell J."/>
            <person name="Lush M.J."/>
            <person name="Lyne R."/>
            <person name="Martin S."/>
            <person name="Mashreghi-Mohammadi M."/>
            <person name="Matthews L."/>
            <person name="Matthews N.S.W."/>
            <person name="McLaren S."/>
            <person name="Milne S."/>
            <person name="Mistry S."/>
            <person name="Moore M.J.F."/>
            <person name="Nickerson T."/>
            <person name="O'Dell C.N."/>
            <person name="Oliver K."/>
            <person name="Palmeiri A."/>
            <person name="Palmer S.A."/>
            <person name="Parker A."/>
            <person name="Patel D."/>
            <person name="Pearce A.V."/>
            <person name="Peck A.I."/>
            <person name="Pelan S."/>
            <person name="Phelps K."/>
            <person name="Phillimore B.J."/>
            <person name="Plumb R."/>
            <person name="Rajan J."/>
            <person name="Raymond C."/>
            <person name="Rouse G."/>
            <person name="Saenphimmachak C."/>
            <person name="Sehra H.K."/>
            <person name="Sheridan E."/>
            <person name="Shownkeen R."/>
            <person name="Sims S."/>
            <person name="Skuce C.D."/>
            <person name="Smith M."/>
            <person name="Steward C."/>
            <person name="Subramanian S."/>
            <person name="Sycamore N."/>
            <person name="Tracey A."/>
            <person name="Tromans A."/>
            <person name="Van Helmond Z."/>
            <person name="Wall M."/>
            <person name="Wallis J.M."/>
            <person name="White S."/>
            <person name="Whitehead S.L."/>
            <person name="Wilkinson J.E."/>
            <person name="Willey D.L."/>
            <person name="Williams H."/>
            <person name="Wilming L."/>
            <person name="Wray P.W."/>
            <person name="Wu Z."/>
            <person name="Coulson A."/>
            <person name="Vaudin M."/>
            <person name="Sulston J.E."/>
            <person name="Durbin R.M."/>
            <person name="Hubbard T."/>
            <person name="Wooster R."/>
            <person name="Dunham I."/>
            <person name="Carter N.P."/>
            <person name="McVean G."/>
            <person name="Ross M.T."/>
            <person name="Harrow J."/>
            <person name="Olson M.V."/>
            <person name="Beck S."/>
            <person name="Rogers J."/>
            <person name="Bentley D.R."/>
        </authorList>
    </citation>
    <scope>NUCLEOTIDE SEQUENCE [LARGE SCALE GENOMIC DNA]</scope>
</reference>
<reference key="5">
    <citation type="journal article" date="2004" name="Genome Res.">
        <title>The status, quality, and expansion of the NIH full-length cDNA project: the Mammalian Gene Collection (MGC).</title>
        <authorList>
            <consortium name="The MGC Project Team"/>
        </authorList>
    </citation>
    <scope>NUCLEOTIDE SEQUENCE [LARGE SCALE MRNA]</scope>
    <source>
        <tissue>Placenta</tissue>
    </source>
</reference>
<reference key="6">
    <citation type="journal article" date="2001" name="Genomics">
        <title>The human mitochondrial ribosomal protein genes: mapping of 54 genes to the chromosomes and implications for human disorders.</title>
        <authorList>
            <person name="Kenmochi N."/>
            <person name="Suzuki T."/>
            <person name="Uechi T."/>
            <person name="Magoori M."/>
            <person name="Kuniba M."/>
            <person name="Higa S."/>
            <person name="Watanabe K."/>
            <person name="Tanaka T."/>
        </authorList>
    </citation>
    <scope>NUCLEOTIDE SEQUENCE [GENOMIC DNA] OF 399-423</scope>
</reference>
<reference key="7">
    <citation type="journal article" date="2011" name="BMC Syst. Biol.">
        <title>Initial characterization of the human central proteome.</title>
        <authorList>
            <person name="Burkard T.R."/>
            <person name="Planyavsky M."/>
            <person name="Kaupe I."/>
            <person name="Breitwieser F.P."/>
            <person name="Buerckstuemmer T."/>
            <person name="Bennett K.L."/>
            <person name="Superti-Furga G."/>
            <person name="Colinge J."/>
        </authorList>
    </citation>
    <scope>IDENTIFICATION BY MASS SPECTROMETRY [LARGE SCALE ANALYSIS]</scope>
</reference>
<reference key="8">
    <citation type="journal article" date="2015" name="Proteomics">
        <title>N-terminome analysis of the human mitochondrial proteome.</title>
        <authorList>
            <person name="Vaca Jacome A.S."/>
            <person name="Rabilloud T."/>
            <person name="Schaeffer-Reiss C."/>
            <person name="Rompais M."/>
            <person name="Ayoub D."/>
            <person name="Lane L."/>
            <person name="Bairoch A."/>
            <person name="Van Dorsselaer A."/>
            <person name="Carapito C."/>
        </authorList>
    </citation>
    <scope>IDENTIFICATION BY MASS SPECTROMETRY [LARGE SCALE ANALYSIS]</scope>
</reference>
<reference evidence="11" key="9">
    <citation type="journal article" date="2014" name="Science">
        <title>Structure of the large ribosomal subunit from human mitochondria.</title>
        <authorList>
            <person name="Brown A."/>
            <person name="Amunts A."/>
            <person name="Bai X.C."/>
            <person name="Sugimoto Y."/>
            <person name="Edwards P.C."/>
            <person name="Murshudov G."/>
            <person name="Scheres S.H."/>
            <person name="Ramakrishnan V."/>
        </authorList>
    </citation>
    <scope>STRUCTURE BY ELECTRON MICROSCOPY (3.40 ANGSTROMS)</scope>
    <scope>SUBCELLULAR LOCATION</scope>
    <scope>SUBUNIT</scope>
</reference>
<reference evidence="12" key="10">
    <citation type="journal article" date="2015" name="Science">
        <title>Ribosome. The structure of the human mitochondrial ribosome.</title>
        <authorList>
            <person name="Amunts A."/>
            <person name="Brown A."/>
            <person name="Toots J."/>
            <person name="Scheres S.H."/>
            <person name="Ramakrishnan V."/>
        </authorList>
    </citation>
    <scope>STRUCTURE BY ELECTRON MICROSCOPY (3.50 ANGSTROMS)</scope>
    <scope>SUBCELLULAR LOCATION</scope>
    <scope>SUBUNIT</scope>
</reference>
<reference evidence="13 14" key="11">
    <citation type="journal article" date="2017" name="Nat. Struct. Mol. Biol.">
        <title>Structures of the human mitochondrial ribosome in native states of assembly.</title>
        <authorList>
            <person name="Brown A."/>
            <person name="Rathore S."/>
            <person name="Kimanius D."/>
            <person name="Aibara S."/>
            <person name="Bai X.C."/>
            <person name="Rorbach J."/>
            <person name="Amunts A."/>
            <person name="Ramakrishnan V."/>
        </authorList>
    </citation>
    <scope>STRUCTURE BY ELECTRON MICROSCOPY (3.03 ANGSTROMS)</scope>
    <scope>SUBCELLULAR LOCATION</scope>
    <scope>SUBUNIT</scope>
</reference>
<reference evidence="15 16" key="12">
    <citation type="journal article" date="2022" name="Nat. Commun.">
        <title>A late-stage assembly checkpoint of the human mitochondrial ribosome large subunit.</title>
        <authorList>
            <person name="Rebelo-Guiomar P."/>
            <person name="Pellegrino S."/>
            <person name="Dent K.C."/>
            <person name="Sas-Chen A."/>
            <person name="Miller-Fleming L."/>
            <person name="Garone C."/>
            <person name="Van Haute L."/>
            <person name="Rogan J.F."/>
            <person name="Dinan A."/>
            <person name="Firth A.E."/>
            <person name="Andrews B."/>
            <person name="Whitworth A.J."/>
            <person name="Schwartz S."/>
            <person name="Warren A.J."/>
            <person name="Minczuk M."/>
        </authorList>
    </citation>
    <scope>STRUCTURE BY ELECTRON MICROSCOPY (2.9 ANGSTROMS) IN COMPLEX WITH MTLSU</scope>
    <scope>SUBUNIT</scope>
</reference>
<organism>
    <name type="scientific">Homo sapiens</name>
    <name type="common">Human</name>
    <dbReference type="NCBI Taxonomy" id="9606"/>
    <lineage>
        <taxon>Eukaryota</taxon>
        <taxon>Metazoa</taxon>
        <taxon>Chordata</taxon>
        <taxon>Craniata</taxon>
        <taxon>Vertebrata</taxon>
        <taxon>Euteleostomi</taxon>
        <taxon>Mammalia</taxon>
        <taxon>Eutheria</taxon>
        <taxon>Euarchontoglires</taxon>
        <taxon>Primates</taxon>
        <taxon>Haplorrhini</taxon>
        <taxon>Catarrhini</taxon>
        <taxon>Hominidae</taxon>
        <taxon>Homo</taxon>
    </lineage>
</organism>
<dbReference type="EMBL" id="AF325707">
    <property type="protein sequence ID" value="AAG52881.1"/>
    <property type="molecule type" value="mRNA"/>
</dbReference>
<dbReference type="EMBL" id="AF151069">
    <property type="protein sequence ID" value="AAF36155.1"/>
    <property type="status" value="ALT_FRAME"/>
    <property type="molecule type" value="mRNA"/>
</dbReference>
<dbReference type="EMBL" id="DQ205685">
    <property type="protein sequence ID" value="ABA27099.1"/>
    <property type="molecule type" value="Genomic_DNA"/>
</dbReference>
<dbReference type="EMBL" id="AL357673">
    <property type="status" value="NOT_ANNOTATED_CDS"/>
    <property type="molecule type" value="Genomic_DNA"/>
</dbReference>
<dbReference type="EMBL" id="AL161644">
    <property type="status" value="NOT_ANNOTATED_CDS"/>
    <property type="molecule type" value="Genomic_DNA"/>
</dbReference>
<dbReference type="EMBL" id="BC000041">
    <property type="protein sequence ID" value="AAH00041.1"/>
    <property type="molecule type" value="mRNA"/>
</dbReference>
<dbReference type="EMBL" id="AB051344">
    <property type="protein sequence ID" value="BAB54934.1"/>
    <property type="molecule type" value="Genomic_DNA"/>
</dbReference>
<dbReference type="CCDS" id="CCDS589.1"/>
<dbReference type="RefSeq" id="NP_057575.2">
    <property type="nucleotide sequence ID" value="NM_016491.3"/>
</dbReference>
<dbReference type="PDB" id="3J7Y">
    <property type="method" value="EM"/>
    <property type="resolution" value="3.40 A"/>
    <property type="chains" value="5=1-423"/>
</dbReference>
<dbReference type="PDB" id="3J9M">
    <property type="method" value="EM"/>
    <property type="resolution" value="3.50 A"/>
    <property type="chains" value="5=1-423"/>
</dbReference>
<dbReference type="PDB" id="5OOL">
    <property type="method" value="EM"/>
    <property type="resolution" value="3.06 A"/>
    <property type="chains" value="5=1-423"/>
</dbReference>
<dbReference type="PDB" id="5OOM">
    <property type="method" value="EM"/>
    <property type="resolution" value="3.03 A"/>
    <property type="chains" value="5=1-423"/>
</dbReference>
<dbReference type="PDB" id="6I9R">
    <property type="method" value="EM"/>
    <property type="resolution" value="3.90 A"/>
    <property type="chains" value="5=1-423"/>
</dbReference>
<dbReference type="PDB" id="6NU2">
    <property type="method" value="EM"/>
    <property type="resolution" value="3.90 A"/>
    <property type="chains" value="5=31-422"/>
</dbReference>
<dbReference type="PDB" id="6NU3">
    <property type="method" value="EM"/>
    <property type="resolution" value="4.40 A"/>
    <property type="chains" value="5=30-423"/>
</dbReference>
<dbReference type="PDB" id="6VLZ">
    <property type="method" value="EM"/>
    <property type="resolution" value="2.97 A"/>
    <property type="chains" value="5=1-423"/>
</dbReference>
<dbReference type="PDB" id="6VMI">
    <property type="method" value="EM"/>
    <property type="resolution" value="2.96 A"/>
    <property type="chains" value="5=1-423"/>
</dbReference>
<dbReference type="PDB" id="6ZM5">
    <property type="method" value="EM"/>
    <property type="resolution" value="2.89 A"/>
    <property type="chains" value="5=1-423"/>
</dbReference>
<dbReference type="PDB" id="6ZM6">
    <property type="method" value="EM"/>
    <property type="resolution" value="2.59 A"/>
    <property type="chains" value="5=1-423"/>
</dbReference>
<dbReference type="PDB" id="6ZS9">
    <property type="method" value="EM"/>
    <property type="resolution" value="4.00 A"/>
    <property type="chains" value="5=1-423"/>
</dbReference>
<dbReference type="PDB" id="6ZSA">
    <property type="method" value="EM"/>
    <property type="resolution" value="4.00 A"/>
    <property type="chains" value="5=1-423"/>
</dbReference>
<dbReference type="PDB" id="6ZSB">
    <property type="method" value="EM"/>
    <property type="resolution" value="4.50 A"/>
    <property type="chains" value="5=1-423"/>
</dbReference>
<dbReference type="PDB" id="6ZSC">
    <property type="method" value="EM"/>
    <property type="resolution" value="3.50 A"/>
    <property type="chains" value="5=1-423"/>
</dbReference>
<dbReference type="PDB" id="6ZSD">
    <property type="method" value="EM"/>
    <property type="resolution" value="3.70 A"/>
    <property type="chains" value="5=1-423"/>
</dbReference>
<dbReference type="PDB" id="6ZSE">
    <property type="method" value="EM"/>
    <property type="resolution" value="5.00 A"/>
    <property type="chains" value="5=1-423"/>
</dbReference>
<dbReference type="PDB" id="6ZSG">
    <property type="method" value="EM"/>
    <property type="resolution" value="4.00 A"/>
    <property type="chains" value="5=1-423"/>
</dbReference>
<dbReference type="PDB" id="7A5F">
    <property type="method" value="EM"/>
    <property type="resolution" value="4.40 A"/>
    <property type="chains" value="53=1-423"/>
</dbReference>
<dbReference type="PDB" id="7A5G">
    <property type="method" value="EM"/>
    <property type="resolution" value="4.33 A"/>
    <property type="chains" value="53=1-423"/>
</dbReference>
<dbReference type="PDB" id="7A5H">
    <property type="method" value="EM"/>
    <property type="resolution" value="3.30 A"/>
    <property type="chains" value="5=1-423"/>
</dbReference>
<dbReference type="PDB" id="7A5I">
    <property type="method" value="EM"/>
    <property type="resolution" value="3.70 A"/>
    <property type="chains" value="53=1-423"/>
</dbReference>
<dbReference type="PDB" id="7A5J">
    <property type="method" value="EM"/>
    <property type="resolution" value="3.10 A"/>
    <property type="chains" value="5=1-423"/>
</dbReference>
<dbReference type="PDB" id="7A5K">
    <property type="method" value="EM"/>
    <property type="resolution" value="3.70 A"/>
    <property type="chains" value="53=1-423"/>
</dbReference>
<dbReference type="PDB" id="7L08">
    <property type="method" value="EM"/>
    <property type="resolution" value="3.49 A"/>
    <property type="chains" value="5=1-423"/>
</dbReference>
<dbReference type="PDB" id="7L20">
    <property type="method" value="EM"/>
    <property type="resolution" value="3.15 A"/>
    <property type="chains" value="5=1-423"/>
</dbReference>
<dbReference type="PDB" id="7O9K">
    <property type="method" value="EM"/>
    <property type="resolution" value="3.10 A"/>
    <property type="chains" value="5=1-423"/>
</dbReference>
<dbReference type="PDB" id="7O9M">
    <property type="method" value="EM"/>
    <property type="resolution" value="2.50 A"/>
    <property type="chains" value="5=1-423"/>
</dbReference>
<dbReference type="PDB" id="7ODR">
    <property type="method" value="EM"/>
    <property type="resolution" value="2.90 A"/>
    <property type="chains" value="5=1-423"/>
</dbReference>
<dbReference type="PDB" id="7ODS">
    <property type="method" value="EM"/>
    <property type="resolution" value="3.10 A"/>
    <property type="chains" value="5=1-423"/>
</dbReference>
<dbReference type="PDB" id="7ODT">
    <property type="method" value="EM"/>
    <property type="resolution" value="3.10 A"/>
    <property type="chains" value="5=1-423"/>
</dbReference>
<dbReference type="PDB" id="7OF0">
    <property type="method" value="EM"/>
    <property type="resolution" value="2.20 A"/>
    <property type="chains" value="5=1-423"/>
</dbReference>
<dbReference type="PDB" id="7OF2">
    <property type="method" value="EM"/>
    <property type="resolution" value="2.70 A"/>
    <property type="chains" value="5=1-423"/>
</dbReference>
<dbReference type="PDB" id="7OF3">
    <property type="method" value="EM"/>
    <property type="resolution" value="2.70 A"/>
    <property type="chains" value="5=1-423"/>
</dbReference>
<dbReference type="PDB" id="7OF4">
    <property type="method" value="EM"/>
    <property type="resolution" value="2.70 A"/>
    <property type="chains" value="5=1-423"/>
</dbReference>
<dbReference type="PDB" id="7OF5">
    <property type="method" value="EM"/>
    <property type="resolution" value="2.90 A"/>
    <property type="chains" value="5=1-423"/>
</dbReference>
<dbReference type="PDB" id="7OF6">
    <property type="method" value="EM"/>
    <property type="resolution" value="2.60 A"/>
    <property type="chains" value="5=1-423"/>
</dbReference>
<dbReference type="PDB" id="7OF7">
    <property type="method" value="EM"/>
    <property type="resolution" value="2.50 A"/>
    <property type="chains" value="5=1-423"/>
</dbReference>
<dbReference type="PDB" id="7OG4">
    <property type="method" value="EM"/>
    <property type="resolution" value="3.80 A"/>
    <property type="chains" value="5=1-423"/>
</dbReference>
<dbReference type="PDB" id="7OI6">
    <property type="method" value="EM"/>
    <property type="resolution" value="5.70 A"/>
    <property type="chains" value="5=1-423"/>
</dbReference>
<dbReference type="PDB" id="7OI7">
    <property type="method" value="EM"/>
    <property type="resolution" value="3.50 A"/>
    <property type="chains" value="5=1-423"/>
</dbReference>
<dbReference type="PDB" id="7OI8">
    <property type="method" value="EM"/>
    <property type="resolution" value="3.50 A"/>
    <property type="chains" value="5=1-423"/>
</dbReference>
<dbReference type="PDB" id="7OI9">
    <property type="method" value="EM"/>
    <property type="resolution" value="3.30 A"/>
    <property type="chains" value="5=1-423"/>
</dbReference>
<dbReference type="PDB" id="7OIA">
    <property type="method" value="EM"/>
    <property type="resolution" value="3.20 A"/>
    <property type="chains" value="5=1-423"/>
</dbReference>
<dbReference type="PDB" id="7OIB">
    <property type="method" value="EM"/>
    <property type="resolution" value="3.30 A"/>
    <property type="chains" value="5=1-423"/>
</dbReference>
<dbReference type="PDB" id="7OIC">
    <property type="method" value="EM"/>
    <property type="resolution" value="3.10 A"/>
    <property type="chains" value="5=1-423"/>
</dbReference>
<dbReference type="PDB" id="7OID">
    <property type="method" value="EM"/>
    <property type="resolution" value="3.70 A"/>
    <property type="chains" value="5=1-423"/>
</dbReference>
<dbReference type="PDB" id="7OIE">
    <property type="method" value="EM"/>
    <property type="resolution" value="3.50 A"/>
    <property type="chains" value="5=1-423"/>
</dbReference>
<dbReference type="PDB" id="7PD3">
    <property type="method" value="EM"/>
    <property type="resolution" value="3.40 A"/>
    <property type="chains" value="5=1-423"/>
</dbReference>
<dbReference type="PDB" id="7PO4">
    <property type="method" value="EM"/>
    <property type="resolution" value="2.56 A"/>
    <property type="chains" value="5=1-423"/>
</dbReference>
<dbReference type="PDB" id="7QH6">
    <property type="method" value="EM"/>
    <property type="resolution" value="3.08 A"/>
    <property type="chains" value="5=1-423"/>
</dbReference>
<dbReference type="PDB" id="7QH7">
    <property type="method" value="EM"/>
    <property type="resolution" value="2.89 A"/>
    <property type="chains" value="5=31-422"/>
</dbReference>
<dbReference type="PDB" id="7QI4">
    <property type="method" value="EM"/>
    <property type="resolution" value="2.21 A"/>
    <property type="chains" value="5=1-423"/>
</dbReference>
<dbReference type="PDB" id="7QI5">
    <property type="method" value="EM"/>
    <property type="resolution" value="2.63 A"/>
    <property type="chains" value="5=1-423"/>
</dbReference>
<dbReference type="PDB" id="7QI6">
    <property type="method" value="EM"/>
    <property type="resolution" value="2.98 A"/>
    <property type="chains" value="5=1-423"/>
</dbReference>
<dbReference type="PDB" id="8ANY">
    <property type="method" value="EM"/>
    <property type="resolution" value="2.85 A"/>
    <property type="chains" value="5=1-423"/>
</dbReference>
<dbReference type="PDB" id="8K2A">
    <property type="method" value="EM"/>
    <property type="resolution" value="2.90 A"/>
    <property type="chains" value="Lk=1-423"/>
</dbReference>
<dbReference type="PDB" id="8K2B">
    <property type="method" value="EM"/>
    <property type="resolution" value="3.40 A"/>
    <property type="chains" value="Lk=1-423"/>
</dbReference>
<dbReference type="PDB" id="8OIR">
    <property type="method" value="EM"/>
    <property type="resolution" value="3.10 A"/>
    <property type="chains" value="Bm=1-423"/>
</dbReference>
<dbReference type="PDB" id="8OIT">
    <property type="method" value="EM"/>
    <property type="resolution" value="2.90 A"/>
    <property type="chains" value="Bm=1-423"/>
</dbReference>
<dbReference type="PDB" id="8PK0">
    <property type="method" value="EM"/>
    <property type="resolution" value="3.03 A"/>
    <property type="chains" value="5=1-423"/>
</dbReference>
<dbReference type="PDB" id="8QSJ">
    <property type="method" value="EM"/>
    <property type="resolution" value="3.00 A"/>
    <property type="chains" value="5=1-423"/>
</dbReference>
<dbReference type="PDB" id="8QU1">
    <property type="method" value="EM"/>
    <property type="resolution" value="2.74 A"/>
    <property type="chains" value="5=1-423"/>
</dbReference>
<dbReference type="PDB" id="8QU5">
    <property type="method" value="EM"/>
    <property type="resolution" value="2.42 A"/>
    <property type="chains" value="5=1-423"/>
</dbReference>
<dbReference type="PDB" id="8RRI">
    <property type="method" value="EM"/>
    <property type="resolution" value="2.40 A"/>
    <property type="chains" value="5=1-423"/>
</dbReference>
<dbReference type="PDB" id="8XT0">
    <property type="method" value="EM"/>
    <property type="resolution" value="3.20 A"/>
    <property type="chains" value="Lk=1-423"/>
</dbReference>
<dbReference type="PDB" id="8XT1">
    <property type="method" value="EM"/>
    <property type="resolution" value="3.10 A"/>
    <property type="chains" value="Lk=1-423"/>
</dbReference>
<dbReference type="PDB" id="8XT2">
    <property type="method" value="EM"/>
    <property type="resolution" value="3.30 A"/>
    <property type="chains" value="Lk=1-423"/>
</dbReference>
<dbReference type="PDB" id="8XT3">
    <property type="method" value="EM"/>
    <property type="resolution" value="3.10 A"/>
    <property type="chains" value="Lk=1-423"/>
</dbReference>
<dbReference type="PDBsum" id="3J7Y"/>
<dbReference type="PDBsum" id="3J9M"/>
<dbReference type="PDBsum" id="5OOL"/>
<dbReference type="PDBsum" id="5OOM"/>
<dbReference type="PDBsum" id="6I9R"/>
<dbReference type="PDBsum" id="6NU2"/>
<dbReference type="PDBsum" id="6NU3"/>
<dbReference type="PDBsum" id="6VLZ"/>
<dbReference type="PDBsum" id="6VMI"/>
<dbReference type="PDBsum" id="6ZM5"/>
<dbReference type="PDBsum" id="6ZM6"/>
<dbReference type="PDBsum" id="6ZS9"/>
<dbReference type="PDBsum" id="6ZSA"/>
<dbReference type="PDBsum" id="6ZSB"/>
<dbReference type="PDBsum" id="6ZSC"/>
<dbReference type="PDBsum" id="6ZSD"/>
<dbReference type="PDBsum" id="6ZSE"/>
<dbReference type="PDBsum" id="6ZSG"/>
<dbReference type="PDBsum" id="7A5F"/>
<dbReference type="PDBsum" id="7A5G"/>
<dbReference type="PDBsum" id="7A5H"/>
<dbReference type="PDBsum" id="7A5I"/>
<dbReference type="PDBsum" id="7A5J"/>
<dbReference type="PDBsum" id="7A5K"/>
<dbReference type="PDBsum" id="7L08"/>
<dbReference type="PDBsum" id="7L20"/>
<dbReference type="PDBsum" id="7O9K"/>
<dbReference type="PDBsum" id="7O9M"/>
<dbReference type="PDBsum" id="7ODR"/>
<dbReference type="PDBsum" id="7ODS"/>
<dbReference type="PDBsum" id="7ODT"/>
<dbReference type="PDBsum" id="7OF0"/>
<dbReference type="PDBsum" id="7OF2"/>
<dbReference type="PDBsum" id="7OF3"/>
<dbReference type="PDBsum" id="7OF4"/>
<dbReference type="PDBsum" id="7OF5"/>
<dbReference type="PDBsum" id="7OF6"/>
<dbReference type="PDBsum" id="7OF7"/>
<dbReference type="PDBsum" id="7OG4"/>
<dbReference type="PDBsum" id="7OI6"/>
<dbReference type="PDBsum" id="7OI7"/>
<dbReference type="PDBsum" id="7OI8"/>
<dbReference type="PDBsum" id="7OI9"/>
<dbReference type="PDBsum" id="7OIA"/>
<dbReference type="PDBsum" id="7OIB"/>
<dbReference type="PDBsum" id="7OIC"/>
<dbReference type="PDBsum" id="7OID"/>
<dbReference type="PDBsum" id="7OIE"/>
<dbReference type="PDBsum" id="7PD3"/>
<dbReference type="PDBsum" id="7PO4"/>
<dbReference type="PDBsum" id="7QH6"/>
<dbReference type="PDBsum" id="7QH7"/>
<dbReference type="PDBsum" id="7QI4"/>
<dbReference type="PDBsum" id="7QI5"/>
<dbReference type="PDBsum" id="7QI6"/>
<dbReference type="PDBsum" id="8ANY"/>
<dbReference type="PDBsum" id="8K2A"/>
<dbReference type="PDBsum" id="8K2B"/>
<dbReference type="PDBsum" id="8OIR"/>
<dbReference type="PDBsum" id="8OIT"/>
<dbReference type="PDBsum" id="8PK0"/>
<dbReference type="PDBsum" id="8QSJ"/>
<dbReference type="PDBsum" id="8QU1"/>
<dbReference type="PDBsum" id="8QU5"/>
<dbReference type="PDBsum" id="8RRI"/>
<dbReference type="PDBsum" id="8XT0"/>
<dbReference type="PDBsum" id="8XT1"/>
<dbReference type="PDBsum" id="8XT2"/>
<dbReference type="PDBsum" id="8XT3"/>
<dbReference type="EMDB" id="EMD-0514"/>
<dbReference type="EMDB" id="EMD-0515"/>
<dbReference type="EMDB" id="EMD-11278"/>
<dbReference type="EMDB" id="EMD-11279"/>
<dbReference type="EMDB" id="EMD-11390"/>
<dbReference type="EMDB" id="EMD-11391"/>
<dbReference type="EMDB" id="EMD-11392"/>
<dbReference type="EMDB" id="EMD-11393"/>
<dbReference type="EMDB" id="EMD-11394"/>
<dbReference type="EMDB" id="EMD-11395"/>
<dbReference type="EMDB" id="EMD-11397"/>
<dbReference type="EMDB" id="EMD-11641"/>
<dbReference type="EMDB" id="EMD-11642"/>
<dbReference type="EMDB" id="EMD-11643"/>
<dbReference type="EMDB" id="EMD-11644"/>
<dbReference type="EMDB" id="EMD-11645"/>
<dbReference type="EMDB" id="EMD-11646"/>
<dbReference type="EMDB" id="EMD-12763"/>
<dbReference type="EMDB" id="EMD-12764"/>
<dbReference type="EMDB" id="EMD-12845"/>
<dbReference type="EMDB" id="EMD-12846"/>
<dbReference type="EMDB" id="EMD-12847"/>
<dbReference type="EMDB" id="EMD-12865"/>
<dbReference type="EMDB" id="EMD-12867"/>
<dbReference type="EMDB" id="EMD-12868"/>
<dbReference type="EMDB" id="EMD-12869"/>
<dbReference type="EMDB" id="EMD-12870"/>
<dbReference type="EMDB" id="EMD-12871"/>
<dbReference type="EMDB" id="EMD-12872"/>
<dbReference type="EMDB" id="EMD-12877"/>
<dbReference type="EMDB" id="EMD-12919"/>
<dbReference type="EMDB" id="EMD-12920"/>
<dbReference type="EMDB" id="EMD-12921"/>
<dbReference type="EMDB" id="EMD-12922"/>
<dbReference type="EMDB" id="EMD-12923"/>
<dbReference type="EMDB" id="EMD-12924"/>
<dbReference type="EMDB" id="EMD-12925"/>
<dbReference type="EMDB" id="EMD-12926"/>
<dbReference type="EMDB" id="EMD-12927"/>
<dbReference type="EMDB" id="EMD-13329"/>
<dbReference type="EMDB" id="EMD-13562"/>
<dbReference type="EMDB" id="EMD-13965"/>
<dbReference type="EMDB" id="EMD-13967"/>
<dbReference type="EMDB" id="EMD-13980"/>
<dbReference type="EMDB" id="EMD-13981"/>
<dbReference type="EMDB" id="EMD-13982"/>
<dbReference type="EMDB" id="EMD-15544"/>
<dbReference type="EMDB" id="EMD-16897"/>
<dbReference type="EMDB" id="EMD-16899"/>
<dbReference type="EMDB" id="EMD-17719"/>
<dbReference type="EMDB" id="EMD-19460"/>
<dbReference type="EMDB" id="EMD-21233"/>
<dbReference type="EMDB" id="EMD-21242"/>
<dbReference type="EMDB" id="EMD-23096"/>
<dbReference type="EMDB" id="EMD-23121"/>
<dbReference type="EMDB" id="EMD-36836"/>
<dbReference type="EMDB" id="EMD-36837"/>
<dbReference type="EMDB" id="EMD-3842"/>
<dbReference type="EMDB" id="EMD-3843"/>
<dbReference type="EMDB" id="EMD-38632"/>
<dbReference type="EMDB" id="EMD-38633"/>
<dbReference type="EMDB" id="EMD-38634"/>
<dbReference type="EMDB" id="EMD-38635"/>
<dbReference type="EMDB" id="EMD-4434"/>
<dbReference type="SMR" id="Q9BZE1"/>
<dbReference type="BioGRID" id="119410">
    <property type="interactions" value="248"/>
</dbReference>
<dbReference type="ComplexPortal" id="CPX-5226">
    <property type="entry name" value="39S mitochondrial large ribosomal subunit"/>
</dbReference>
<dbReference type="CORUM" id="Q9BZE1"/>
<dbReference type="DIP" id="DIP-59718N"/>
<dbReference type="FunCoup" id="Q9BZE1">
    <property type="interactions" value="1210"/>
</dbReference>
<dbReference type="IntAct" id="Q9BZE1">
    <property type="interactions" value="107"/>
</dbReference>
<dbReference type="MINT" id="Q9BZE1"/>
<dbReference type="STRING" id="9606.ENSP00000473980"/>
<dbReference type="GlyGen" id="Q9BZE1">
    <property type="glycosylation" value="1 site, 1 O-linked glycan (1 site)"/>
</dbReference>
<dbReference type="iPTMnet" id="Q9BZE1"/>
<dbReference type="PhosphoSitePlus" id="Q9BZE1"/>
<dbReference type="SwissPalm" id="Q9BZE1"/>
<dbReference type="BioMuta" id="MRPL37"/>
<dbReference type="DMDM" id="152083350"/>
<dbReference type="jPOST" id="Q9BZE1"/>
<dbReference type="MassIVE" id="Q9BZE1"/>
<dbReference type="PaxDb" id="9606-ENSP00000354086"/>
<dbReference type="PeptideAtlas" id="Q9BZE1"/>
<dbReference type="ProteomicsDB" id="79819"/>
<dbReference type="Pumba" id="Q9BZE1"/>
<dbReference type="Antibodypedia" id="19283">
    <property type="antibodies" value="82 antibodies from 23 providers"/>
</dbReference>
<dbReference type="DNASU" id="51253"/>
<dbReference type="Ensembl" id="ENST00000360840.9">
    <property type="protein sequence ID" value="ENSP00000354086.5"/>
    <property type="gene ID" value="ENSG00000116221.15"/>
</dbReference>
<dbReference type="GeneID" id="51253"/>
<dbReference type="KEGG" id="hsa:51253"/>
<dbReference type="MANE-Select" id="ENST00000360840.9">
    <property type="protein sequence ID" value="ENSP00000354086.5"/>
    <property type="RefSeq nucleotide sequence ID" value="NM_016491.4"/>
    <property type="RefSeq protein sequence ID" value="NP_057575.2"/>
</dbReference>
<dbReference type="UCSC" id="uc001cxa.4">
    <property type="organism name" value="human"/>
</dbReference>
<dbReference type="AGR" id="HGNC:14034"/>
<dbReference type="CTD" id="51253"/>
<dbReference type="DisGeNET" id="51253"/>
<dbReference type="GeneCards" id="MRPL37"/>
<dbReference type="HGNC" id="HGNC:14034">
    <property type="gene designation" value="MRPL37"/>
</dbReference>
<dbReference type="HPA" id="ENSG00000116221">
    <property type="expression patterns" value="Low tissue specificity"/>
</dbReference>
<dbReference type="MIM" id="611843">
    <property type="type" value="gene"/>
</dbReference>
<dbReference type="neXtProt" id="NX_Q9BZE1"/>
<dbReference type="OpenTargets" id="ENSG00000116221"/>
<dbReference type="PharmGKB" id="PA30968"/>
<dbReference type="VEuPathDB" id="HostDB:ENSG00000116221"/>
<dbReference type="eggNOG" id="ENOG502QQAQ">
    <property type="taxonomic scope" value="Eukaryota"/>
</dbReference>
<dbReference type="GeneTree" id="ENSGT00390000000867"/>
<dbReference type="HOGENOM" id="CLU_037022_1_0_1"/>
<dbReference type="InParanoid" id="Q9BZE1"/>
<dbReference type="OMA" id="WERGWHD"/>
<dbReference type="OrthoDB" id="5835618at2759"/>
<dbReference type="PAN-GO" id="Q9BZE1">
    <property type="GO annotations" value="1 GO annotation based on evolutionary models"/>
</dbReference>
<dbReference type="PhylomeDB" id="Q9BZE1"/>
<dbReference type="TreeFam" id="TF323297"/>
<dbReference type="PathwayCommons" id="Q9BZE1"/>
<dbReference type="Reactome" id="R-HSA-5368286">
    <property type="pathway name" value="Mitochondrial translation initiation"/>
</dbReference>
<dbReference type="Reactome" id="R-HSA-5389840">
    <property type="pathway name" value="Mitochondrial translation elongation"/>
</dbReference>
<dbReference type="Reactome" id="R-HSA-5419276">
    <property type="pathway name" value="Mitochondrial translation termination"/>
</dbReference>
<dbReference type="SignaLink" id="Q9BZE1"/>
<dbReference type="SIGNOR" id="Q9BZE1"/>
<dbReference type="BioGRID-ORCS" id="51253">
    <property type="hits" value="350 hits in 1157 CRISPR screens"/>
</dbReference>
<dbReference type="ChiTaRS" id="MRPL37">
    <property type="organism name" value="human"/>
</dbReference>
<dbReference type="EvolutionaryTrace" id="Q9BZE1"/>
<dbReference type="GeneWiki" id="MRPL37"/>
<dbReference type="GenomeRNAi" id="51253"/>
<dbReference type="Pharos" id="Q9BZE1">
    <property type="development level" value="Tdark"/>
</dbReference>
<dbReference type="PRO" id="PR:Q9BZE1"/>
<dbReference type="Proteomes" id="UP000005640">
    <property type="component" value="Chromosome 1"/>
</dbReference>
<dbReference type="RNAct" id="Q9BZE1">
    <property type="molecule type" value="protein"/>
</dbReference>
<dbReference type="Bgee" id="ENSG00000116221">
    <property type="expression patterns" value="Expressed in gastrocnemius and 185 other cell types or tissues"/>
</dbReference>
<dbReference type="ExpressionAtlas" id="Q9BZE1">
    <property type="expression patterns" value="baseline and differential"/>
</dbReference>
<dbReference type="GO" id="GO:0005743">
    <property type="term" value="C:mitochondrial inner membrane"/>
    <property type="evidence" value="ECO:0000304"/>
    <property type="project" value="Reactome"/>
</dbReference>
<dbReference type="GO" id="GO:0005762">
    <property type="term" value="C:mitochondrial large ribosomal subunit"/>
    <property type="evidence" value="ECO:0000314"/>
    <property type="project" value="UniProtKB"/>
</dbReference>
<dbReference type="GO" id="GO:0005761">
    <property type="term" value="C:mitochondrial ribosome"/>
    <property type="evidence" value="ECO:0000303"/>
    <property type="project" value="UniProtKB"/>
</dbReference>
<dbReference type="GO" id="GO:0005739">
    <property type="term" value="C:mitochondrion"/>
    <property type="evidence" value="ECO:0000314"/>
    <property type="project" value="UniProtKB"/>
</dbReference>
<dbReference type="GO" id="GO:0003723">
    <property type="term" value="F:RNA binding"/>
    <property type="evidence" value="ECO:0007005"/>
    <property type="project" value="UniProtKB"/>
</dbReference>
<dbReference type="GO" id="GO:0003735">
    <property type="term" value="F:structural constituent of ribosome"/>
    <property type="evidence" value="ECO:0000303"/>
    <property type="project" value="UniProtKB"/>
</dbReference>
<dbReference type="GO" id="GO:0032543">
    <property type="term" value="P:mitochondrial translation"/>
    <property type="evidence" value="ECO:0000303"/>
    <property type="project" value="ComplexPortal"/>
</dbReference>
<dbReference type="GO" id="GO:0006412">
    <property type="term" value="P:translation"/>
    <property type="evidence" value="ECO:0000303"/>
    <property type="project" value="UniProtKB"/>
</dbReference>
<dbReference type="InterPro" id="IPR052482">
    <property type="entry name" value="mtLSU_mL37"/>
</dbReference>
<dbReference type="InterPro" id="IPR010793">
    <property type="entry name" value="Ribosomal_mL37/mL65"/>
</dbReference>
<dbReference type="PANTHER" id="PTHR15889:SF2">
    <property type="entry name" value="LARGE RIBOSOMAL SUBUNIT PROTEIN ML37"/>
    <property type="match status" value="1"/>
</dbReference>
<dbReference type="PANTHER" id="PTHR15889">
    <property type="entry name" value="MITOCHONDRIAL RIBOSOMAL PROTEIN L37"/>
    <property type="match status" value="1"/>
</dbReference>
<dbReference type="Pfam" id="PF07147">
    <property type="entry name" value="PDCD9"/>
    <property type="match status" value="1"/>
</dbReference>
<feature type="transit peptide" description="Mitochondrion" evidence="1">
    <location>
        <begin position="1"/>
        <end position="29"/>
    </location>
</feature>
<feature type="chain" id="PRO_0000045905" description="Large ribosomal subunit protein mL37">
    <location>
        <begin position="30"/>
        <end position="423"/>
    </location>
</feature>
<feature type="sequence variant" id="VAR_025269" description="In dbSNP:rs2275408." evidence="8">
    <original>L</original>
    <variation>V</variation>
    <location>
        <position position="322"/>
    </location>
</feature>
<feature type="sequence variant" id="VAR_025270" description="In dbSNP:rs13571." evidence="2 7 8">
    <original>C</original>
    <variation>S</variation>
    <location>
        <position position="366"/>
    </location>
</feature>
<feature type="turn" evidence="19">
    <location>
        <begin position="36"/>
        <end position="38"/>
    </location>
</feature>
<feature type="helix" evidence="19">
    <location>
        <begin position="48"/>
        <end position="51"/>
    </location>
</feature>
<feature type="strand" evidence="18">
    <location>
        <begin position="53"/>
        <end position="55"/>
    </location>
</feature>
<feature type="turn" evidence="19">
    <location>
        <begin position="60"/>
        <end position="64"/>
    </location>
</feature>
<feature type="strand" evidence="17">
    <location>
        <begin position="68"/>
        <end position="71"/>
    </location>
</feature>
<feature type="strand" evidence="19">
    <location>
        <begin position="79"/>
        <end position="81"/>
    </location>
</feature>
<feature type="helix" evidence="19">
    <location>
        <begin position="85"/>
        <end position="87"/>
    </location>
</feature>
<feature type="helix" evidence="19">
    <location>
        <begin position="93"/>
        <end position="95"/>
    </location>
</feature>
<feature type="strand" evidence="20">
    <location>
        <begin position="96"/>
        <end position="98"/>
    </location>
</feature>
<feature type="strand" evidence="19">
    <location>
        <begin position="99"/>
        <end position="107"/>
    </location>
</feature>
<feature type="helix" evidence="19">
    <location>
        <begin position="117"/>
        <end position="124"/>
    </location>
</feature>
<feature type="strand" evidence="19">
    <location>
        <begin position="126"/>
        <end position="131"/>
    </location>
</feature>
<feature type="helix" evidence="19">
    <location>
        <begin position="134"/>
        <end position="137"/>
    </location>
</feature>
<feature type="helix" evidence="19">
    <location>
        <begin position="138"/>
        <end position="140"/>
    </location>
</feature>
<feature type="turn" evidence="19">
    <location>
        <begin position="143"/>
        <end position="145"/>
    </location>
</feature>
<feature type="helix" evidence="19">
    <location>
        <begin position="150"/>
        <end position="162"/>
    </location>
</feature>
<feature type="strand" evidence="19">
    <location>
        <begin position="165"/>
        <end position="170"/>
    </location>
</feature>
<feature type="helix" evidence="19">
    <location>
        <begin position="173"/>
        <end position="189"/>
    </location>
</feature>
<feature type="helix" evidence="19">
    <location>
        <begin position="190"/>
        <end position="192"/>
    </location>
</feature>
<feature type="helix" evidence="19">
    <location>
        <begin position="196"/>
        <end position="199"/>
    </location>
</feature>
<feature type="strand" evidence="19">
    <location>
        <begin position="200"/>
        <end position="206"/>
    </location>
</feature>
<feature type="strand" evidence="19">
    <location>
        <begin position="209"/>
        <end position="215"/>
    </location>
</feature>
<feature type="strand" evidence="19">
    <location>
        <begin position="218"/>
        <end position="224"/>
    </location>
</feature>
<feature type="strand" evidence="19">
    <location>
        <begin position="229"/>
        <end position="234"/>
    </location>
</feature>
<feature type="helix" evidence="19">
    <location>
        <begin position="242"/>
        <end position="247"/>
    </location>
</feature>
<feature type="turn" evidence="19">
    <location>
        <begin position="248"/>
        <end position="250"/>
    </location>
</feature>
<feature type="strand" evidence="19">
    <location>
        <begin position="257"/>
        <end position="259"/>
    </location>
</feature>
<feature type="turn" evidence="19">
    <location>
        <begin position="261"/>
        <end position="264"/>
    </location>
</feature>
<feature type="strand" evidence="19">
    <location>
        <begin position="265"/>
        <end position="270"/>
    </location>
</feature>
<feature type="strand" evidence="19">
    <location>
        <begin position="287"/>
        <end position="294"/>
    </location>
</feature>
<feature type="turn" evidence="19">
    <location>
        <begin position="300"/>
        <end position="302"/>
    </location>
</feature>
<feature type="helix" evidence="19">
    <location>
        <begin position="306"/>
        <end position="328"/>
    </location>
</feature>
<feature type="strand" evidence="19">
    <location>
        <begin position="335"/>
        <end position="362"/>
    </location>
</feature>
<feature type="strand" evidence="19">
    <location>
        <begin position="365"/>
        <end position="367"/>
    </location>
</feature>
<feature type="strand" evidence="19">
    <location>
        <begin position="372"/>
        <end position="382"/>
    </location>
</feature>
<feature type="strand" evidence="19">
    <location>
        <begin position="384"/>
        <end position="389"/>
    </location>
</feature>
<feature type="strand" evidence="19">
    <location>
        <begin position="391"/>
        <end position="393"/>
    </location>
</feature>
<feature type="strand" evidence="19">
    <location>
        <begin position="396"/>
        <end position="399"/>
    </location>
</feature>
<feature type="strand" evidence="19">
    <location>
        <begin position="401"/>
        <end position="405"/>
    </location>
</feature>
<feature type="helix" evidence="19">
    <location>
        <begin position="408"/>
        <end position="419"/>
    </location>
</feature>
<gene>
    <name type="primary">MRPL37</name>
    <name type="synonym">MRPL2</name>
    <name type="synonym">RPML2</name>
    <name type="ORF">HSPC235</name>
</gene>
<evidence type="ECO:0000250" key="1"/>
<evidence type="ECO:0000269" key="2">
    <source>
    </source>
</evidence>
<evidence type="ECO:0000269" key="3">
    <source>
    </source>
</evidence>
<evidence type="ECO:0000269" key="4">
    <source>
    </source>
</evidence>
<evidence type="ECO:0000269" key="5">
    <source>
    </source>
</evidence>
<evidence type="ECO:0000269" key="6">
    <source>
    </source>
</evidence>
<evidence type="ECO:0000269" key="7">
    <source ref="1"/>
</evidence>
<evidence type="ECO:0000269" key="8">
    <source ref="3"/>
</evidence>
<evidence type="ECO:0000303" key="9">
    <source>
    </source>
</evidence>
<evidence type="ECO:0000305" key="10"/>
<evidence type="ECO:0007744" key="11">
    <source>
        <dbReference type="PDB" id="3J7Y"/>
    </source>
</evidence>
<evidence type="ECO:0007744" key="12">
    <source>
        <dbReference type="PDB" id="3J9M"/>
    </source>
</evidence>
<evidence type="ECO:0007744" key="13">
    <source>
        <dbReference type="PDB" id="5OOL"/>
    </source>
</evidence>
<evidence type="ECO:0007744" key="14">
    <source>
        <dbReference type="PDB" id="5OOM"/>
    </source>
</evidence>
<evidence type="ECO:0007744" key="15">
    <source>
        <dbReference type="PDB" id="7QH6"/>
    </source>
</evidence>
<evidence type="ECO:0007744" key="16">
    <source>
        <dbReference type="PDB" id="7QH7"/>
    </source>
</evidence>
<evidence type="ECO:0007829" key="17">
    <source>
        <dbReference type="PDB" id="3J7Y"/>
    </source>
</evidence>
<evidence type="ECO:0007829" key="18">
    <source>
        <dbReference type="PDB" id="5OOL"/>
    </source>
</evidence>
<evidence type="ECO:0007829" key="19">
    <source>
        <dbReference type="PDB" id="7OF0"/>
    </source>
</evidence>
<evidence type="ECO:0007829" key="20">
    <source>
        <dbReference type="PDB" id="7QH7"/>
    </source>
</evidence>
<keyword id="KW-0002">3D-structure</keyword>
<keyword id="KW-0496">Mitochondrion</keyword>
<keyword id="KW-1267">Proteomics identification</keyword>
<keyword id="KW-1185">Reference proteome</keyword>
<keyword id="KW-0687">Ribonucleoprotein</keyword>
<keyword id="KW-0689">Ribosomal protein</keyword>
<keyword id="KW-0809">Transit peptide</keyword>
<protein>
    <recommendedName>
        <fullName evidence="9">Large ribosomal subunit protein mL37</fullName>
    </recommendedName>
    <alternativeName>
        <fullName>39S ribosomal protein L2, mitochondrial</fullName>
        <shortName>L2mt</shortName>
        <shortName>MRP-L2</shortName>
    </alternativeName>
    <alternativeName>
        <fullName>39S ribosomal protein L37, mitochondrial</fullName>
        <shortName>L37mt</shortName>
        <shortName>MRP-L37</shortName>
    </alternativeName>
</protein>
<sequence length="423" mass="48117">MALASGPARRALAGSGQLGLGGFGAPRRGAYEWGVRSTRKSEPPPLDRVYEIPGLEPITFAGKMHFVPWLARPIFPPWDRGYKDPRFYRSPPLHEHPLYKDQACYIFHHRCRLLEGVKQALWLTKTKLIEGLPEKVLSLVDDPRNHIENQDECVLNVISHARLWQTTEEIPKRETYCPVIVDNLIQLCKSQILKHPSLARRICVQNSTFSATWNRESLLLQVRGSGGARLSTKDPLPTIASREEIEATKNHVLETFYPISPIIDLHECNIYDVKNDTGFQEGYPYPYPHTLYLLDKANLRPHRLQPDQLRAKMILFAFGSALAQARLLYGNDAKVLEQPVVVQSVGTDGRVFHFLVFQLNTTDLDCNEGVKNLAWVDSDQLLYQHFWCLPVIKKRVVVEPVGPVGFKPETFRKFLALYLHGAA</sequence>